<accession>Q8KCH7</accession>
<protein>
    <recommendedName>
        <fullName evidence="1">Triosephosphate isomerase</fullName>
        <shortName evidence="1">TIM</shortName>
        <shortName evidence="1">TPI</shortName>
        <ecNumber evidence="1">5.3.1.1</ecNumber>
    </recommendedName>
    <alternativeName>
        <fullName evidence="1">Triose-phosphate isomerase</fullName>
    </alternativeName>
</protein>
<gene>
    <name evidence="1" type="primary">tpiA</name>
    <name type="ordered locus">CT1444</name>
</gene>
<evidence type="ECO:0000255" key="1">
    <source>
        <dbReference type="HAMAP-Rule" id="MF_00147"/>
    </source>
</evidence>
<sequence>MVGNWKMNNTIAESVDLATAIAEKVGADGVQCEVGIAPTFPALYEVCKVIEWSGIRLCAQNCHYESDGPFTGEVSTRMLAAAGCSYVILGHSERRQLFGETNATVNLKVKKALAEGLSVILCVGETLDERERGVTGQIVTAQVVEGLIDVTDISKLVIAYEPVWAIGTGKTATKEQAQEVHALIRAKVTELYGQKAADHLRIQYGGSVKPSNAAELFAMPDIDGGLIGGASLNADDFMAIVEAAG</sequence>
<keyword id="KW-0963">Cytoplasm</keyword>
<keyword id="KW-0312">Gluconeogenesis</keyword>
<keyword id="KW-0324">Glycolysis</keyword>
<keyword id="KW-0413">Isomerase</keyword>
<keyword id="KW-1185">Reference proteome</keyword>
<proteinExistence type="inferred from homology"/>
<comment type="function">
    <text evidence="1">Involved in the gluconeogenesis. Catalyzes stereospecifically the conversion of dihydroxyacetone phosphate (DHAP) to D-glyceraldehyde-3-phosphate (G3P).</text>
</comment>
<comment type="catalytic activity">
    <reaction evidence="1">
        <text>D-glyceraldehyde 3-phosphate = dihydroxyacetone phosphate</text>
        <dbReference type="Rhea" id="RHEA:18585"/>
        <dbReference type="ChEBI" id="CHEBI:57642"/>
        <dbReference type="ChEBI" id="CHEBI:59776"/>
        <dbReference type="EC" id="5.3.1.1"/>
    </reaction>
</comment>
<comment type="pathway">
    <text evidence="1">Carbohydrate biosynthesis; gluconeogenesis.</text>
</comment>
<comment type="pathway">
    <text evidence="1">Carbohydrate degradation; glycolysis; D-glyceraldehyde 3-phosphate from glycerone phosphate: step 1/1.</text>
</comment>
<comment type="subunit">
    <text evidence="1">Homodimer.</text>
</comment>
<comment type="subcellular location">
    <subcellularLocation>
        <location evidence="1">Cytoplasm</location>
    </subcellularLocation>
</comment>
<comment type="similarity">
    <text evidence="1">Belongs to the triosephosphate isomerase family.</text>
</comment>
<feature type="chain" id="PRO_0000090206" description="Triosephosphate isomerase">
    <location>
        <begin position="1"/>
        <end position="245"/>
    </location>
</feature>
<feature type="active site" description="Electrophile" evidence="1">
    <location>
        <position position="91"/>
    </location>
</feature>
<feature type="active site" description="Proton acceptor" evidence="1">
    <location>
        <position position="161"/>
    </location>
</feature>
<feature type="binding site" evidence="1">
    <location>
        <begin position="4"/>
        <end position="6"/>
    </location>
    <ligand>
        <name>substrate</name>
    </ligand>
</feature>
<feature type="binding site" evidence="1">
    <location>
        <position position="167"/>
    </location>
    <ligand>
        <name>substrate</name>
    </ligand>
</feature>
<feature type="binding site" evidence="1">
    <location>
        <position position="207"/>
    </location>
    <ligand>
        <name>substrate</name>
    </ligand>
</feature>
<feature type="binding site" evidence="1">
    <location>
        <begin position="228"/>
        <end position="229"/>
    </location>
    <ligand>
        <name>substrate</name>
    </ligand>
</feature>
<reference key="1">
    <citation type="journal article" date="2002" name="Proc. Natl. Acad. Sci. U.S.A.">
        <title>The complete genome sequence of Chlorobium tepidum TLS, a photosynthetic, anaerobic, green-sulfur bacterium.</title>
        <authorList>
            <person name="Eisen J.A."/>
            <person name="Nelson K.E."/>
            <person name="Paulsen I.T."/>
            <person name="Heidelberg J.F."/>
            <person name="Wu M."/>
            <person name="Dodson R.J."/>
            <person name="DeBoy R.T."/>
            <person name="Gwinn M.L."/>
            <person name="Nelson W.C."/>
            <person name="Haft D.H."/>
            <person name="Hickey E.K."/>
            <person name="Peterson J.D."/>
            <person name="Durkin A.S."/>
            <person name="Kolonay J.F."/>
            <person name="Yang F."/>
            <person name="Holt I.E."/>
            <person name="Umayam L.A."/>
            <person name="Mason T.M."/>
            <person name="Brenner M."/>
            <person name="Shea T.P."/>
            <person name="Parksey D.S."/>
            <person name="Nierman W.C."/>
            <person name="Feldblyum T.V."/>
            <person name="Hansen C.L."/>
            <person name="Craven M.B."/>
            <person name="Radune D."/>
            <person name="Vamathevan J.J."/>
            <person name="Khouri H.M."/>
            <person name="White O."/>
            <person name="Gruber T.M."/>
            <person name="Ketchum K.A."/>
            <person name="Venter J.C."/>
            <person name="Tettelin H."/>
            <person name="Bryant D.A."/>
            <person name="Fraser C.M."/>
        </authorList>
    </citation>
    <scope>NUCLEOTIDE SEQUENCE [LARGE SCALE GENOMIC DNA]</scope>
    <source>
        <strain>ATCC 49652 / DSM 12025 / NBRC 103806 / TLS</strain>
    </source>
</reference>
<name>TPIS_CHLTE</name>
<dbReference type="EC" id="5.3.1.1" evidence="1"/>
<dbReference type="EMBL" id="AE006470">
    <property type="protein sequence ID" value="AAM72672.1"/>
    <property type="molecule type" value="Genomic_DNA"/>
</dbReference>
<dbReference type="RefSeq" id="NP_662330.1">
    <property type="nucleotide sequence ID" value="NC_002932.3"/>
</dbReference>
<dbReference type="SMR" id="Q8KCH7"/>
<dbReference type="STRING" id="194439.CT1444"/>
<dbReference type="EnsemblBacteria" id="AAM72672">
    <property type="protein sequence ID" value="AAM72672"/>
    <property type="gene ID" value="CT1444"/>
</dbReference>
<dbReference type="KEGG" id="cte:CT1444"/>
<dbReference type="PATRIC" id="fig|194439.7.peg.1310"/>
<dbReference type="eggNOG" id="COG0149">
    <property type="taxonomic scope" value="Bacteria"/>
</dbReference>
<dbReference type="HOGENOM" id="CLU_024251_2_1_10"/>
<dbReference type="OrthoDB" id="9809429at2"/>
<dbReference type="UniPathway" id="UPA00109">
    <property type="reaction ID" value="UER00189"/>
</dbReference>
<dbReference type="UniPathway" id="UPA00138"/>
<dbReference type="Proteomes" id="UP000001007">
    <property type="component" value="Chromosome"/>
</dbReference>
<dbReference type="GO" id="GO:0005829">
    <property type="term" value="C:cytosol"/>
    <property type="evidence" value="ECO:0007669"/>
    <property type="project" value="TreeGrafter"/>
</dbReference>
<dbReference type="GO" id="GO:0004807">
    <property type="term" value="F:triose-phosphate isomerase activity"/>
    <property type="evidence" value="ECO:0007669"/>
    <property type="project" value="UniProtKB-UniRule"/>
</dbReference>
<dbReference type="GO" id="GO:0006094">
    <property type="term" value="P:gluconeogenesis"/>
    <property type="evidence" value="ECO:0007669"/>
    <property type="project" value="UniProtKB-UniRule"/>
</dbReference>
<dbReference type="GO" id="GO:0046166">
    <property type="term" value="P:glyceraldehyde-3-phosphate biosynthetic process"/>
    <property type="evidence" value="ECO:0007669"/>
    <property type="project" value="TreeGrafter"/>
</dbReference>
<dbReference type="GO" id="GO:0019563">
    <property type="term" value="P:glycerol catabolic process"/>
    <property type="evidence" value="ECO:0007669"/>
    <property type="project" value="TreeGrafter"/>
</dbReference>
<dbReference type="GO" id="GO:0006096">
    <property type="term" value="P:glycolytic process"/>
    <property type="evidence" value="ECO:0007669"/>
    <property type="project" value="UniProtKB-UniRule"/>
</dbReference>
<dbReference type="CDD" id="cd00311">
    <property type="entry name" value="TIM"/>
    <property type="match status" value="1"/>
</dbReference>
<dbReference type="FunFam" id="3.20.20.70:FF:000016">
    <property type="entry name" value="Triosephosphate isomerase"/>
    <property type="match status" value="1"/>
</dbReference>
<dbReference type="Gene3D" id="3.20.20.70">
    <property type="entry name" value="Aldolase class I"/>
    <property type="match status" value="1"/>
</dbReference>
<dbReference type="HAMAP" id="MF_00147_B">
    <property type="entry name" value="TIM_B"/>
    <property type="match status" value="1"/>
</dbReference>
<dbReference type="InterPro" id="IPR013785">
    <property type="entry name" value="Aldolase_TIM"/>
</dbReference>
<dbReference type="InterPro" id="IPR035990">
    <property type="entry name" value="TIM_sf"/>
</dbReference>
<dbReference type="InterPro" id="IPR022896">
    <property type="entry name" value="TrioseP_Isoase_bac/euk"/>
</dbReference>
<dbReference type="InterPro" id="IPR000652">
    <property type="entry name" value="Triosephosphate_isomerase"/>
</dbReference>
<dbReference type="InterPro" id="IPR020861">
    <property type="entry name" value="Triosephosphate_isomerase_AS"/>
</dbReference>
<dbReference type="NCBIfam" id="TIGR00419">
    <property type="entry name" value="tim"/>
    <property type="match status" value="1"/>
</dbReference>
<dbReference type="PANTHER" id="PTHR21139">
    <property type="entry name" value="TRIOSEPHOSPHATE ISOMERASE"/>
    <property type="match status" value="1"/>
</dbReference>
<dbReference type="PANTHER" id="PTHR21139:SF42">
    <property type="entry name" value="TRIOSEPHOSPHATE ISOMERASE"/>
    <property type="match status" value="1"/>
</dbReference>
<dbReference type="Pfam" id="PF00121">
    <property type="entry name" value="TIM"/>
    <property type="match status" value="1"/>
</dbReference>
<dbReference type="SUPFAM" id="SSF51351">
    <property type="entry name" value="Triosephosphate isomerase (TIM)"/>
    <property type="match status" value="1"/>
</dbReference>
<dbReference type="PROSITE" id="PS00171">
    <property type="entry name" value="TIM_1"/>
    <property type="match status" value="1"/>
</dbReference>
<dbReference type="PROSITE" id="PS51440">
    <property type="entry name" value="TIM_2"/>
    <property type="match status" value="1"/>
</dbReference>
<organism>
    <name type="scientific">Chlorobaculum tepidum (strain ATCC 49652 / DSM 12025 / NBRC 103806 / TLS)</name>
    <name type="common">Chlorobium tepidum</name>
    <dbReference type="NCBI Taxonomy" id="194439"/>
    <lineage>
        <taxon>Bacteria</taxon>
        <taxon>Pseudomonadati</taxon>
        <taxon>Chlorobiota</taxon>
        <taxon>Chlorobiia</taxon>
        <taxon>Chlorobiales</taxon>
        <taxon>Chlorobiaceae</taxon>
        <taxon>Chlorobaculum</taxon>
    </lineage>
</organism>